<reference key="1">
    <citation type="submission" date="2009-01" db="EMBL/GenBank/DDBJ databases">
        <title>Complete sequence of chromosome of Arthrobacter chlorophenolicus A6.</title>
        <authorList>
            <consortium name="US DOE Joint Genome Institute"/>
            <person name="Lucas S."/>
            <person name="Copeland A."/>
            <person name="Lapidus A."/>
            <person name="Glavina del Rio T."/>
            <person name="Tice H."/>
            <person name="Bruce D."/>
            <person name="Goodwin L."/>
            <person name="Pitluck S."/>
            <person name="Goltsman E."/>
            <person name="Clum A."/>
            <person name="Larimer F."/>
            <person name="Land M."/>
            <person name="Hauser L."/>
            <person name="Kyrpides N."/>
            <person name="Mikhailova N."/>
            <person name="Jansson J."/>
            <person name="Richardson P."/>
        </authorList>
    </citation>
    <scope>NUCLEOTIDE SEQUENCE [LARGE SCALE GENOMIC DNA]</scope>
    <source>
        <strain>ATCC 700700 / DSM 12829 / CIP 107037 / JCM 12360 / KCTC 9906 / NCIMB 13794 / A6</strain>
    </source>
</reference>
<organism>
    <name type="scientific">Pseudarthrobacter chlorophenolicus (strain ATCC 700700 / DSM 12829 / CIP 107037 / JCM 12360 / KCTC 9906 / NCIMB 13794 / A6)</name>
    <name type="common">Arthrobacter chlorophenolicus</name>
    <dbReference type="NCBI Taxonomy" id="452863"/>
    <lineage>
        <taxon>Bacteria</taxon>
        <taxon>Bacillati</taxon>
        <taxon>Actinomycetota</taxon>
        <taxon>Actinomycetes</taxon>
        <taxon>Micrococcales</taxon>
        <taxon>Micrococcaceae</taxon>
        <taxon>Pseudarthrobacter</taxon>
    </lineage>
</organism>
<feature type="chain" id="PRO_0000380293" description="DNA ligase 1">
    <location>
        <begin position="1"/>
        <end position="770"/>
    </location>
</feature>
<feature type="domain" description="BRCT" evidence="1">
    <location>
        <begin position="657"/>
        <end position="746"/>
    </location>
</feature>
<feature type="region of interest" description="Disordered" evidence="2">
    <location>
        <begin position="1"/>
        <end position="27"/>
    </location>
</feature>
<feature type="region of interest" description="Disordered" evidence="2">
    <location>
        <begin position="741"/>
        <end position="770"/>
    </location>
</feature>
<feature type="compositionally biased region" description="Low complexity" evidence="2">
    <location>
        <begin position="1"/>
        <end position="18"/>
    </location>
</feature>
<feature type="compositionally biased region" description="Acidic residues" evidence="2">
    <location>
        <begin position="744"/>
        <end position="753"/>
    </location>
</feature>
<feature type="compositionally biased region" description="Basic and acidic residues" evidence="2">
    <location>
        <begin position="759"/>
        <end position="770"/>
    </location>
</feature>
<feature type="active site" description="N6-AMP-lysine intermediate" evidence="1">
    <location>
        <position position="144"/>
    </location>
</feature>
<feature type="binding site" evidence="1">
    <location>
        <begin position="57"/>
        <end position="61"/>
    </location>
    <ligand>
        <name>NAD(+)</name>
        <dbReference type="ChEBI" id="CHEBI:57540"/>
    </ligand>
</feature>
<feature type="binding site" evidence="1">
    <location>
        <begin position="106"/>
        <end position="107"/>
    </location>
    <ligand>
        <name>NAD(+)</name>
        <dbReference type="ChEBI" id="CHEBI:57540"/>
    </ligand>
</feature>
<feature type="binding site" evidence="1">
    <location>
        <position position="142"/>
    </location>
    <ligand>
        <name>NAD(+)</name>
        <dbReference type="ChEBI" id="CHEBI:57540"/>
    </ligand>
</feature>
<feature type="binding site" evidence="1">
    <location>
        <position position="165"/>
    </location>
    <ligand>
        <name>NAD(+)</name>
        <dbReference type="ChEBI" id="CHEBI:57540"/>
    </ligand>
</feature>
<feature type="binding site" evidence="1">
    <location>
        <position position="202"/>
    </location>
    <ligand>
        <name>NAD(+)</name>
        <dbReference type="ChEBI" id="CHEBI:57540"/>
    </ligand>
</feature>
<feature type="binding site" evidence="1">
    <location>
        <position position="318"/>
    </location>
    <ligand>
        <name>NAD(+)</name>
        <dbReference type="ChEBI" id="CHEBI:57540"/>
    </ligand>
</feature>
<feature type="binding site" evidence="1">
    <location>
        <position position="342"/>
    </location>
    <ligand>
        <name>NAD(+)</name>
        <dbReference type="ChEBI" id="CHEBI:57540"/>
    </ligand>
</feature>
<feature type="binding site" evidence="1">
    <location>
        <position position="439"/>
    </location>
    <ligand>
        <name>Zn(2+)</name>
        <dbReference type="ChEBI" id="CHEBI:29105"/>
    </ligand>
</feature>
<feature type="binding site" evidence="1">
    <location>
        <position position="442"/>
    </location>
    <ligand>
        <name>Zn(2+)</name>
        <dbReference type="ChEBI" id="CHEBI:29105"/>
    </ligand>
</feature>
<feature type="binding site" evidence="1">
    <location>
        <position position="458"/>
    </location>
    <ligand>
        <name>Zn(2+)</name>
        <dbReference type="ChEBI" id="CHEBI:29105"/>
    </ligand>
</feature>
<feature type="binding site" evidence="1">
    <location>
        <position position="464"/>
    </location>
    <ligand>
        <name>Zn(2+)</name>
        <dbReference type="ChEBI" id="CHEBI:29105"/>
    </ligand>
</feature>
<keyword id="KW-0227">DNA damage</keyword>
<keyword id="KW-0234">DNA repair</keyword>
<keyword id="KW-0235">DNA replication</keyword>
<keyword id="KW-0436">Ligase</keyword>
<keyword id="KW-0460">Magnesium</keyword>
<keyword id="KW-0464">Manganese</keyword>
<keyword id="KW-0479">Metal-binding</keyword>
<keyword id="KW-0520">NAD</keyword>
<keyword id="KW-0862">Zinc</keyword>
<accession>B8HFJ3</accession>
<gene>
    <name evidence="1" type="primary">ligA1</name>
    <name type="ordered locus">Achl_1342</name>
</gene>
<evidence type="ECO:0000255" key="1">
    <source>
        <dbReference type="HAMAP-Rule" id="MF_01588"/>
    </source>
</evidence>
<evidence type="ECO:0000256" key="2">
    <source>
        <dbReference type="SAM" id="MobiDB-lite"/>
    </source>
</evidence>
<protein>
    <recommendedName>
        <fullName evidence="1">DNA ligase 1</fullName>
        <ecNumber evidence="1">6.5.1.2</ecNumber>
    </recommendedName>
    <alternativeName>
        <fullName evidence="1">Polydeoxyribonucleotide synthase [NAD(+)] 1</fullName>
    </alternativeName>
</protein>
<name>DNLJ1_PSECP</name>
<proteinExistence type="inferred from homology"/>
<dbReference type="EC" id="6.5.1.2" evidence="1"/>
<dbReference type="EMBL" id="CP001341">
    <property type="protein sequence ID" value="ACL39332.1"/>
    <property type="molecule type" value="Genomic_DNA"/>
</dbReference>
<dbReference type="RefSeq" id="WP_015936555.1">
    <property type="nucleotide sequence ID" value="NC_011886.1"/>
</dbReference>
<dbReference type="SMR" id="B8HFJ3"/>
<dbReference type="STRING" id="452863.Achl_1342"/>
<dbReference type="KEGG" id="ach:Achl_1342"/>
<dbReference type="eggNOG" id="COG0272">
    <property type="taxonomic scope" value="Bacteria"/>
</dbReference>
<dbReference type="HOGENOM" id="CLU_007764_2_1_11"/>
<dbReference type="OrthoDB" id="9759736at2"/>
<dbReference type="Proteomes" id="UP000002505">
    <property type="component" value="Chromosome"/>
</dbReference>
<dbReference type="GO" id="GO:0005829">
    <property type="term" value="C:cytosol"/>
    <property type="evidence" value="ECO:0007669"/>
    <property type="project" value="TreeGrafter"/>
</dbReference>
<dbReference type="GO" id="GO:0003911">
    <property type="term" value="F:DNA ligase (NAD+) activity"/>
    <property type="evidence" value="ECO:0007669"/>
    <property type="project" value="UniProtKB-UniRule"/>
</dbReference>
<dbReference type="GO" id="GO:0046872">
    <property type="term" value="F:metal ion binding"/>
    <property type="evidence" value="ECO:0007669"/>
    <property type="project" value="UniProtKB-KW"/>
</dbReference>
<dbReference type="GO" id="GO:0006281">
    <property type="term" value="P:DNA repair"/>
    <property type="evidence" value="ECO:0007669"/>
    <property type="project" value="UniProtKB-KW"/>
</dbReference>
<dbReference type="GO" id="GO:0006260">
    <property type="term" value="P:DNA replication"/>
    <property type="evidence" value="ECO:0007669"/>
    <property type="project" value="UniProtKB-KW"/>
</dbReference>
<dbReference type="CDD" id="cd17748">
    <property type="entry name" value="BRCT_DNA_ligase_like"/>
    <property type="match status" value="1"/>
</dbReference>
<dbReference type="CDD" id="cd00114">
    <property type="entry name" value="LIGANc"/>
    <property type="match status" value="1"/>
</dbReference>
<dbReference type="FunFam" id="1.10.150.20:FF:000006">
    <property type="entry name" value="DNA ligase"/>
    <property type="match status" value="1"/>
</dbReference>
<dbReference type="FunFam" id="2.40.50.140:FF:000012">
    <property type="entry name" value="DNA ligase"/>
    <property type="match status" value="1"/>
</dbReference>
<dbReference type="FunFam" id="3.30.470.30:FF:000001">
    <property type="entry name" value="DNA ligase"/>
    <property type="match status" value="1"/>
</dbReference>
<dbReference type="FunFam" id="3.40.50.10190:FF:000054">
    <property type="entry name" value="DNA ligase"/>
    <property type="match status" value="1"/>
</dbReference>
<dbReference type="Gene3D" id="6.20.10.30">
    <property type="match status" value="1"/>
</dbReference>
<dbReference type="Gene3D" id="1.10.150.20">
    <property type="entry name" value="5' to 3' exonuclease, C-terminal subdomain"/>
    <property type="match status" value="2"/>
</dbReference>
<dbReference type="Gene3D" id="3.40.50.10190">
    <property type="entry name" value="BRCT domain"/>
    <property type="match status" value="1"/>
</dbReference>
<dbReference type="Gene3D" id="3.30.470.30">
    <property type="entry name" value="DNA ligase/mRNA capping enzyme"/>
    <property type="match status" value="1"/>
</dbReference>
<dbReference type="Gene3D" id="1.10.287.610">
    <property type="entry name" value="Helix hairpin bin"/>
    <property type="match status" value="1"/>
</dbReference>
<dbReference type="Gene3D" id="2.40.50.140">
    <property type="entry name" value="Nucleic acid-binding proteins"/>
    <property type="match status" value="1"/>
</dbReference>
<dbReference type="HAMAP" id="MF_01588">
    <property type="entry name" value="DNA_ligase_A"/>
    <property type="match status" value="1"/>
</dbReference>
<dbReference type="InterPro" id="IPR001357">
    <property type="entry name" value="BRCT_dom"/>
</dbReference>
<dbReference type="InterPro" id="IPR036420">
    <property type="entry name" value="BRCT_dom_sf"/>
</dbReference>
<dbReference type="InterPro" id="IPR041663">
    <property type="entry name" value="DisA/LigA_HHH"/>
</dbReference>
<dbReference type="InterPro" id="IPR001679">
    <property type="entry name" value="DNA_ligase"/>
</dbReference>
<dbReference type="InterPro" id="IPR018239">
    <property type="entry name" value="DNA_ligase_AS"/>
</dbReference>
<dbReference type="InterPro" id="IPR033136">
    <property type="entry name" value="DNA_ligase_CS"/>
</dbReference>
<dbReference type="InterPro" id="IPR013839">
    <property type="entry name" value="DNAligase_adenylation"/>
</dbReference>
<dbReference type="InterPro" id="IPR013840">
    <property type="entry name" value="DNAligase_N"/>
</dbReference>
<dbReference type="InterPro" id="IPR012340">
    <property type="entry name" value="NA-bd_OB-fold"/>
</dbReference>
<dbReference type="InterPro" id="IPR004150">
    <property type="entry name" value="NAD_DNA_ligase_OB"/>
</dbReference>
<dbReference type="InterPro" id="IPR010994">
    <property type="entry name" value="RuvA_2-like"/>
</dbReference>
<dbReference type="InterPro" id="IPR004149">
    <property type="entry name" value="Znf_DNAligase_C4"/>
</dbReference>
<dbReference type="NCBIfam" id="TIGR00575">
    <property type="entry name" value="dnlj"/>
    <property type="match status" value="1"/>
</dbReference>
<dbReference type="NCBIfam" id="NF005932">
    <property type="entry name" value="PRK07956.1"/>
    <property type="match status" value="1"/>
</dbReference>
<dbReference type="PANTHER" id="PTHR23389">
    <property type="entry name" value="CHROMOSOME TRANSMISSION FIDELITY FACTOR 18"/>
    <property type="match status" value="1"/>
</dbReference>
<dbReference type="PANTHER" id="PTHR23389:SF9">
    <property type="entry name" value="DNA LIGASE"/>
    <property type="match status" value="1"/>
</dbReference>
<dbReference type="Pfam" id="PF00533">
    <property type="entry name" value="BRCT"/>
    <property type="match status" value="1"/>
</dbReference>
<dbReference type="Pfam" id="PF01653">
    <property type="entry name" value="DNA_ligase_aden"/>
    <property type="match status" value="1"/>
</dbReference>
<dbReference type="Pfam" id="PF03120">
    <property type="entry name" value="DNA_ligase_OB"/>
    <property type="match status" value="1"/>
</dbReference>
<dbReference type="Pfam" id="PF03119">
    <property type="entry name" value="DNA_ligase_ZBD"/>
    <property type="match status" value="1"/>
</dbReference>
<dbReference type="Pfam" id="PF12826">
    <property type="entry name" value="HHH_2"/>
    <property type="match status" value="1"/>
</dbReference>
<dbReference type="PIRSF" id="PIRSF001604">
    <property type="entry name" value="LigA"/>
    <property type="match status" value="1"/>
</dbReference>
<dbReference type="SMART" id="SM00292">
    <property type="entry name" value="BRCT"/>
    <property type="match status" value="1"/>
</dbReference>
<dbReference type="SMART" id="SM00532">
    <property type="entry name" value="LIGANc"/>
    <property type="match status" value="1"/>
</dbReference>
<dbReference type="SUPFAM" id="SSF52113">
    <property type="entry name" value="BRCT domain"/>
    <property type="match status" value="1"/>
</dbReference>
<dbReference type="SUPFAM" id="SSF56091">
    <property type="entry name" value="DNA ligase/mRNA capping enzyme, catalytic domain"/>
    <property type="match status" value="1"/>
</dbReference>
<dbReference type="SUPFAM" id="SSF50249">
    <property type="entry name" value="Nucleic acid-binding proteins"/>
    <property type="match status" value="1"/>
</dbReference>
<dbReference type="SUPFAM" id="SSF47781">
    <property type="entry name" value="RuvA domain 2-like"/>
    <property type="match status" value="1"/>
</dbReference>
<dbReference type="PROSITE" id="PS50172">
    <property type="entry name" value="BRCT"/>
    <property type="match status" value="1"/>
</dbReference>
<dbReference type="PROSITE" id="PS01055">
    <property type="entry name" value="DNA_LIGASE_N1"/>
    <property type="match status" value="1"/>
</dbReference>
<dbReference type="PROSITE" id="PS01056">
    <property type="entry name" value="DNA_LIGASE_N2"/>
    <property type="match status" value="1"/>
</dbReference>
<comment type="function">
    <text evidence="1">DNA ligase that catalyzes the formation of phosphodiester linkages between 5'-phosphoryl and 3'-hydroxyl groups in double-stranded DNA using NAD as a coenzyme and as the energy source for the reaction. It is essential for DNA replication and repair of damaged DNA.</text>
</comment>
<comment type="catalytic activity">
    <reaction evidence="1">
        <text>NAD(+) + (deoxyribonucleotide)n-3'-hydroxyl + 5'-phospho-(deoxyribonucleotide)m = (deoxyribonucleotide)n+m + AMP + beta-nicotinamide D-nucleotide.</text>
        <dbReference type="EC" id="6.5.1.2"/>
    </reaction>
</comment>
<comment type="cofactor">
    <cofactor evidence="1">
        <name>Mg(2+)</name>
        <dbReference type="ChEBI" id="CHEBI:18420"/>
    </cofactor>
    <cofactor evidence="1">
        <name>Mn(2+)</name>
        <dbReference type="ChEBI" id="CHEBI:29035"/>
    </cofactor>
</comment>
<comment type="similarity">
    <text evidence="1">Belongs to the NAD-dependent DNA ligase family. LigA subfamily.</text>
</comment>
<sequence>MSTGEGTAEQTATGTPAQNGRESIPSDAIREEYENLSDLIRKYRFAYYQDDAPLVSDAEFDTLFRRLEEIEALHPELVANDSPTQEVGGEASAAFAAVEHLQRMYSLEDVFSIEELEAWLNRAEASIAKLGDGTAQAAWLTELKIDGLAVNLLYRDGKLVRAATRGDGTTGEDITHNVLTIKEIPQQLSGEGYPSEVEVRGEVFIPSKAFAEFNEALIEAGKAPLANPRNAAAGSLRQKDPAETAKRPLKMFVHGIGAREGLEARSQSETYALLKEWGLPVSPYFEVLEARADVLGFISKYGEQRHKLLHEIDGIVIKVDDFATQRALGYTTRVPRWAVAYKYPPEEVHTKLLDIQVNVGRTGRVTPFGMMEPVKVAGSTVEMATLHNQDVVKAKGVKIGDIVVLRKAGDVIPEIVGPVLALRDQQDPPVRDFVMPTECPACGTPLAPAKEGDVDIRCPNGKSCPSQLRERVFHLAGRGGFDIEALGWEAAIALTQPAEPDVPPLTSEAALFDLTREDLADVKIRREKRSKGVATGEYELVPYFYSKGTAKSPSKPTASTEKLFKELDKAKSQPLWRVLVALSIRHVGPRASRALAQAFGTMDGIRAASEEELAHVDGVGPTIAAALKEWFAEDWHREIVDRWAAAGVRMEDERDESTPRTLEGLTVVVTGSLPNFSRDEAKEAILVRGGKASGSVSKNTSYVVAGESAGTKLDKAEQLGIRVLDEDGFRLLLDGGPAAVGDAAEADGGDAPEESAALQEEKAAAVEETA</sequence>